<accession>O64764</accession>
<accession>Q8GW51</accession>
<sequence length="194" mass="21191">MKGNWSIVRKVLHRQFSTLRSSTPSSRLSTSIRPLVLAPNSISSLIARNSLFTASNIGPSIDFNFSNTSLPHRRSLCSEAGGENGVVLVKSEEEFINAMSKAQDGSLPSVFYFTAAWCGPCRFISPVIVELSKQYPDVTTYKVDIDEGGISNTISKLNITAVPTLHFFKGGSKKGEVVGADVTKLKNLMEQLYK</sequence>
<gene>
    <name type="ordered locus">At2g35010</name>
    <name type="ORF">F19I3.24</name>
</gene>
<name>TRXO1_ARATH</name>
<organism>
    <name type="scientific">Arabidopsis thaliana</name>
    <name type="common">Mouse-ear cress</name>
    <dbReference type="NCBI Taxonomy" id="3702"/>
    <lineage>
        <taxon>Eukaryota</taxon>
        <taxon>Viridiplantae</taxon>
        <taxon>Streptophyta</taxon>
        <taxon>Embryophyta</taxon>
        <taxon>Tracheophyta</taxon>
        <taxon>Spermatophyta</taxon>
        <taxon>Magnoliopsida</taxon>
        <taxon>eudicotyledons</taxon>
        <taxon>Gunneridae</taxon>
        <taxon>Pentapetalae</taxon>
        <taxon>rosids</taxon>
        <taxon>malvids</taxon>
        <taxon>Brassicales</taxon>
        <taxon>Brassicaceae</taxon>
        <taxon>Camelineae</taxon>
        <taxon>Arabidopsis</taxon>
    </lineage>
</organism>
<feature type="transit peptide" description="Mitochondrion" evidence="3">
    <location>
        <begin position="1"/>
        <end position="42"/>
    </location>
</feature>
<feature type="chain" id="PRO_0000394537" description="Thioredoxin O1, mitochondrial">
    <location>
        <begin position="43"/>
        <end position="194"/>
    </location>
</feature>
<feature type="domain" description="Thioredoxin" evidence="4">
    <location>
        <begin position="89"/>
        <end position="194"/>
    </location>
</feature>
<feature type="active site" description="Nucleophile" evidence="1">
    <location>
        <position position="118"/>
    </location>
</feature>
<feature type="active site" description="Nucleophile" evidence="1">
    <location>
        <position position="121"/>
    </location>
</feature>
<feature type="site" description="Contributes to redox potential value" evidence="1">
    <location>
        <position position="119"/>
    </location>
</feature>
<feature type="site" description="Contributes to redox potential value" evidence="1">
    <location>
        <position position="120"/>
    </location>
</feature>
<feature type="modified residue" description="Phosphoserine" evidence="2">
    <location>
        <position position="75"/>
    </location>
</feature>
<feature type="disulfide bond" description="Redox-active" evidence="4">
    <location>
        <begin position="118"/>
        <end position="121"/>
    </location>
</feature>
<feature type="sequence conflict" description="In Ref. 4; BAC43652." evidence="6" ref="4">
    <original>V</original>
    <variation>A</variation>
    <location>
        <position position="110"/>
    </location>
</feature>
<feature type="strand" evidence="7">
    <location>
        <begin position="86"/>
        <end position="89"/>
    </location>
</feature>
<feature type="helix" evidence="7">
    <location>
        <begin position="92"/>
        <end position="102"/>
    </location>
</feature>
<feature type="turn" evidence="7">
    <location>
        <begin position="103"/>
        <end position="105"/>
    </location>
</feature>
<feature type="strand" evidence="7">
    <location>
        <begin position="109"/>
        <end position="114"/>
    </location>
</feature>
<feature type="helix" evidence="7">
    <location>
        <begin position="121"/>
        <end position="134"/>
    </location>
</feature>
<feature type="strand" evidence="7">
    <location>
        <begin position="139"/>
        <end position="144"/>
    </location>
</feature>
<feature type="helix" evidence="7">
    <location>
        <begin position="151"/>
        <end position="155"/>
    </location>
</feature>
<feature type="turn" evidence="7">
    <location>
        <begin position="156"/>
        <end position="158"/>
    </location>
</feature>
<feature type="strand" evidence="7">
    <location>
        <begin position="161"/>
        <end position="169"/>
    </location>
</feature>
<feature type="strand" evidence="7">
    <location>
        <begin position="172"/>
        <end position="180"/>
    </location>
</feature>
<feature type="helix" evidence="7">
    <location>
        <begin position="182"/>
        <end position="193"/>
    </location>
</feature>
<evidence type="ECO:0000250" key="1"/>
<evidence type="ECO:0000250" key="2">
    <source>
        <dbReference type="UniProtKB" id="Q9C9Y6"/>
    </source>
</evidence>
<evidence type="ECO:0000255" key="3"/>
<evidence type="ECO:0000255" key="4">
    <source>
        <dbReference type="PROSITE-ProRule" id="PRU00691"/>
    </source>
</evidence>
<evidence type="ECO:0000269" key="5">
    <source>
    </source>
</evidence>
<evidence type="ECO:0000305" key="6"/>
<evidence type="ECO:0007829" key="7">
    <source>
        <dbReference type="PDB" id="6G61"/>
    </source>
</evidence>
<dbReference type="EMBL" id="AC004238">
    <property type="protein sequence ID" value="AAC12840.1"/>
    <property type="molecule type" value="Genomic_DNA"/>
</dbReference>
<dbReference type="EMBL" id="CP002685">
    <property type="protein sequence ID" value="AEC09048.1"/>
    <property type="molecule type" value="Genomic_DNA"/>
</dbReference>
<dbReference type="EMBL" id="CP002685">
    <property type="protein sequence ID" value="AEC09049.1"/>
    <property type="molecule type" value="Genomic_DNA"/>
</dbReference>
<dbReference type="EMBL" id="BT025773">
    <property type="protein sequence ID" value="ABF83663.1"/>
    <property type="molecule type" value="mRNA"/>
</dbReference>
<dbReference type="EMBL" id="AK119076">
    <property type="protein sequence ID" value="BAC43652.1"/>
    <property type="status" value="ALT_INIT"/>
    <property type="molecule type" value="mRNA"/>
</dbReference>
<dbReference type="PIR" id="T00482">
    <property type="entry name" value="T00482"/>
</dbReference>
<dbReference type="RefSeq" id="NP_001078006.1">
    <property type="nucleotide sequence ID" value="NM_001084537.1"/>
</dbReference>
<dbReference type="RefSeq" id="NP_181046.1">
    <property type="nucleotide sequence ID" value="NM_129053.6"/>
</dbReference>
<dbReference type="PDB" id="6G61">
    <property type="method" value="X-ray"/>
    <property type="resolution" value="1.80 A"/>
    <property type="chains" value="A=83-194"/>
</dbReference>
<dbReference type="PDBsum" id="6G61"/>
<dbReference type="SMR" id="O64764"/>
<dbReference type="BioGRID" id="3411">
    <property type="interactions" value="1"/>
</dbReference>
<dbReference type="FunCoup" id="O64764">
    <property type="interactions" value="1116"/>
</dbReference>
<dbReference type="IntAct" id="O64764">
    <property type="interactions" value="2"/>
</dbReference>
<dbReference type="STRING" id="3702.O64764"/>
<dbReference type="SwissPalm" id="O64764"/>
<dbReference type="PaxDb" id="3702-AT2G35010.2"/>
<dbReference type="ProteomicsDB" id="228702"/>
<dbReference type="EnsemblPlants" id="AT2G35010.1">
    <property type="protein sequence ID" value="AT2G35010.1"/>
    <property type="gene ID" value="AT2G35010"/>
</dbReference>
<dbReference type="EnsemblPlants" id="AT2G35010.2">
    <property type="protein sequence ID" value="AT2G35010.2"/>
    <property type="gene ID" value="AT2G35010"/>
</dbReference>
<dbReference type="GeneID" id="818065"/>
<dbReference type="Gramene" id="AT2G35010.1">
    <property type="protein sequence ID" value="AT2G35010.1"/>
    <property type="gene ID" value="AT2G35010"/>
</dbReference>
<dbReference type="Gramene" id="AT2G35010.2">
    <property type="protein sequence ID" value="AT2G35010.2"/>
    <property type="gene ID" value="AT2G35010"/>
</dbReference>
<dbReference type="KEGG" id="ath:AT2G35010"/>
<dbReference type="Araport" id="AT2G35010"/>
<dbReference type="TAIR" id="AT2G35010">
    <property type="gene designation" value="TO1"/>
</dbReference>
<dbReference type="eggNOG" id="KOG0907">
    <property type="taxonomic scope" value="Eukaryota"/>
</dbReference>
<dbReference type="HOGENOM" id="CLU_090389_6_1_1"/>
<dbReference type="InParanoid" id="O64764"/>
<dbReference type="OMA" id="NWSIVRQ"/>
<dbReference type="PhylomeDB" id="O64764"/>
<dbReference type="CD-CODE" id="4299E36E">
    <property type="entry name" value="Nucleolus"/>
</dbReference>
<dbReference type="PRO" id="PR:O64764"/>
<dbReference type="Proteomes" id="UP000006548">
    <property type="component" value="Chromosome 2"/>
</dbReference>
<dbReference type="ExpressionAtlas" id="O64764">
    <property type="expression patterns" value="baseline and differential"/>
</dbReference>
<dbReference type="GO" id="GO:0005829">
    <property type="term" value="C:cytosol"/>
    <property type="evidence" value="ECO:0007005"/>
    <property type="project" value="TAIR"/>
</dbReference>
<dbReference type="GO" id="GO:0005783">
    <property type="term" value="C:endoplasmic reticulum"/>
    <property type="evidence" value="ECO:0007005"/>
    <property type="project" value="TAIR"/>
</dbReference>
<dbReference type="GO" id="GO:0005759">
    <property type="term" value="C:mitochondrial matrix"/>
    <property type="evidence" value="ECO:0000314"/>
    <property type="project" value="UniProtKB"/>
</dbReference>
<dbReference type="GO" id="GO:0005739">
    <property type="term" value="C:mitochondrion"/>
    <property type="evidence" value="ECO:0007005"/>
    <property type="project" value="TAIR"/>
</dbReference>
<dbReference type="GO" id="GO:0016671">
    <property type="term" value="F:oxidoreductase activity, acting on a sulfur group of donors, disulfide as acceptor"/>
    <property type="evidence" value="ECO:0000314"/>
    <property type="project" value="UniProtKB"/>
</dbReference>
<dbReference type="CDD" id="cd02947">
    <property type="entry name" value="TRX_family"/>
    <property type="match status" value="1"/>
</dbReference>
<dbReference type="FunFam" id="3.40.30.10:FF:000245">
    <property type="entry name" value="Thioredoxin"/>
    <property type="match status" value="1"/>
</dbReference>
<dbReference type="Gene3D" id="3.40.30.10">
    <property type="entry name" value="Glutaredoxin"/>
    <property type="match status" value="1"/>
</dbReference>
<dbReference type="InterPro" id="IPR036249">
    <property type="entry name" value="Thioredoxin-like_sf"/>
</dbReference>
<dbReference type="InterPro" id="IPR013766">
    <property type="entry name" value="Thioredoxin_domain"/>
</dbReference>
<dbReference type="PANTHER" id="PTHR46115">
    <property type="entry name" value="THIOREDOXIN-LIKE PROTEIN 1"/>
    <property type="match status" value="1"/>
</dbReference>
<dbReference type="Pfam" id="PF00085">
    <property type="entry name" value="Thioredoxin"/>
    <property type="match status" value="1"/>
</dbReference>
<dbReference type="PRINTS" id="PR00421">
    <property type="entry name" value="THIOREDOXIN"/>
</dbReference>
<dbReference type="SUPFAM" id="SSF52833">
    <property type="entry name" value="Thioredoxin-like"/>
    <property type="match status" value="1"/>
</dbReference>
<dbReference type="PROSITE" id="PS51352">
    <property type="entry name" value="THIOREDOXIN_2"/>
    <property type="match status" value="1"/>
</dbReference>
<proteinExistence type="evidence at protein level"/>
<protein>
    <recommendedName>
        <fullName>Thioredoxin O1, mitochondrial</fullName>
        <shortName>AtTrxo1</shortName>
    </recommendedName>
</protein>
<keyword id="KW-0002">3D-structure</keyword>
<keyword id="KW-1015">Disulfide bond</keyword>
<keyword id="KW-0249">Electron transport</keyword>
<keyword id="KW-0496">Mitochondrion</keyword>
<keyword id="KW-0597">Phosphoprotein</keyword>
<keyword id="KW-0676">Redox-active center</keyword>
<keyword id="KW-1185">Reference proteome</keyword>
<keyword id="KW-0809">Transit peptide</keyword>
<keyword id="KW-0813">Transport</keyword>
<reference key="1">
    <citation type="journal article" date="1999" name="Nature">
        <title>Sequence and analysis of chromosome 2 of the plant Arabidopsis thaliana.</title>
        <authorList>
            <person name="Lin X."/>
            <person name="Kaul S."/>
            <person name="Rounsley S.D."/>
            <person name="Shea T.P."/>
            <person name="Benito M.-I."/>
            <person name="Town C.D."/>
            <person name="Fujii C.Y."/>
            <person name="Mason T.M."/>
            <person name="Bowman C.L."/>
            <person name="Barnstead M.E."/>
            <person name="Feldblyum T.V."/>
            <person name="Buell C.R."/>
            <person name="Ketchum K.A."/>
            <person name="Lee J.J."/>
            <person name="Ronning C.M."/>
            <person name="Koo H.L."/>
            <person name="Moffat K.S."/>
            <person name="Cronin L.A."/>
            <person name="Shen M."/>
            <person name="Pai G."/>
            <person name="Van Aken S."/>
            <person name="Umayam L."/>
            <person name="Tallon L.J."/>
            <person name="Gill J.E."/>
            <person name="Adams M.D."/>
            <person name="Carrera A.J."/>
            <person name="Creasy T.H."/>
            <person name="Goodman H.M."/>
            <person name="Somerville C.R."/>
            <person name="Copenhaver G.P."/>
            <person name="Preuss D."/>
            <person name="Nierman W.C."/>
            <person name="White O."/>
            <person name="Eisen J.A."/>
            <person name="Salzberg S.L."/>
            <person name="Fraser C.M."/>
            <person name="Venter J.C."/>
        </authorList>
    </citation>
    <scope>NUCLEOTIDE SEQUENCE [LARGE SCALE GENOMIC DNA]</scope>
    <source>
        <strain>cv. Columbia</strain>
    </source>
</reference>
<reference key="2">
    <citation type="journal article" date="2017" name="Plant J.">
        <title>Araport11: a complete reannotation of the Arabidopsis thaliana reference genome.</title>
        <authorList>
            <person name="Cheng C.Y."/>
            <person name="Krishnakumar V."/>
            <person name="Chan A.P."/>
            <person name="Thibaud-Nissen F."/>
            <person name="Schobel S."/>
            <person name="Town C.D."/>
        </authorList>
    </citation>
    <scope>GENOME REANNOTATION</scope>
    <source>
        <strain>cv. Columbia</strain>
    </source>
</reference>
<reference key="3">
    <citation type="submission" date="2006-06" db="EMBL/GenBank/DDBJ databases">
        <title>Arabidopsis ORF clones.</title>
        <authorList>
            <person name="Kim C.J."/>
            <person name="Chen H."/>
            <person name="Quinitio C."/>
            <person name="Shinn P."/>
            <person name="Ecker J.R."/>
        </authorList>
    </citation>
    <scope>NUCLEOTIDE SEQUENCE [LARGE SCALE MRNA]</scope>
    <source>
        <strain>cv. Columbia</strain>
    </source>
</reference>
<reference key="4">
    <citation type="journal article" date="2002" name="Science">
        <title>Functional annotation of a full-length Arabidopsis cDNA collection.</title>
        <authorList>
            <person name="Seki M."/>
            <person name="Narusaka M."/>
            <person name="Kamiya A."/>
            <person name="Ishida J."/>
            <person name="Satou M."/>
            <person name="Sakurai T."/>
            <person name="Nakajima M."/>
            <person name="Enju A."/>
            <person name="Akiyama K."/>
            <person name="Oono Y."/>
            <person name="Muramatsu M."/>
            <person name="Hayashizaki Y."/>
            <person name="Kawai J."/>
            <person name="Carninci P."/>
            <person name="Itoh M."/>
            <person name="Ishii Y."/>
            <person name="Arakawa T."/>
            <person name="Shibata K."/>
            <person name="Shinagawa A."/>
            <person name="Shinozaki K."/>
        </authorList>
    </citation>
    <scope>NUCLEOTIDE SEQUENCE [LARGE SCALE MRNA] OF 2-194</scope>
    <source>
        <strain>cv. Columbia</strain>
    </source>
</reference>
<reference key="5">
    <citation type="journal article" date="2001" name="Proc. Natl. Acad. Sci. U.S.A.">
        <title>Identification and characterization of a mitochondrial thioredoxin system in plants.</title>
        <authorList>
            <person name="Laloi C."/>
            <person name="Rayapuram N."/>
            <person name="Chartier Y."/>
            <person name="Grienenberger J.M."/>
            <person name="Bonnard G."/>
            <person name="Meyer Y."/>
        </authorList>
    </citation>
    <scope>FUNCTION</scope>
    <scope>SUBCELLULAR LOCATION</scope>
</reference>
<reference key="6">
    <citation type="journal article" date="2009" name="Mol. Plant">
        <title>Comparative genomic study of the thioredoxin family in photosynthetic organisms with emphasis on Populus trichocarpa.</title>
        <authorList>
            <person name="Chibani K."/>
            <person name="Wingsle G."/>
            <person name="Jacquot J.P."/>
            <person name="Gelhaye E."/>
            <person name="Rouhier N."/>
        </authorList>
    </citation>
    <scope>GENE FAMILY</scope>
    <scope>NOMENCLATURE</scope>
</reference>
<comment type="function">
    <text evidence="5">Thiol-disulfide oxidoreductase that may participate in various redox reactions. Possesses insulin disulfide bonds reducing activity. Reduced by thioredoxin reductases NTRA and NTRB.</text>
</comment>
<comment type="interaction">
    <interactant intactId="EBI-25519089">
        <id>O64764</id>
    </interactant>
    <interactant intactId="EBI-4426649">
        <id>Q17TI5</id>
        <label>BRX</label>
    </interactant>
    <organismsDiffer>false</organismsDiffer>
    <experiments>3</experiments>
</comment>
<comment type="subcellular location">
    <subcellularLocation>
        <location evidence="5">Mitochondrion matrix</location>
    </subcellularLocation>
</comment>
<comment type="similarity">
    <text evidence="6">Belongs to the thioredoxin family. Plant O-type subfamily.</text>
</comment>
<comment type="sequence caution" evidence="6">
    <conflict type="erroneous initiation">
        <sequence resource="EMBL-CDS" id="BAC43652"/>
    </conflict>
    <text>Truncated N-terminus.</text>
</comment>